<accession>A9N7T7</accession>
<reference key="1">
    <citation type="submission" date="2007-11" db="EMBL/GenBank/DDBJ databases">
        <authorList>
            <consortium name="The Salmonella enterica serovar Paratyphi B Genome Sequencing Project"/>
            <person name="McClelland M."/>
            <person name="Sanderson E.K."/>
            <person name="Porwollik S."/>
            <person name="Spieth J."/>
            <person name="Clifton W.S."/>
            <person name="Fulton R."/>
            <person name="Cordes M."/>
            <person name="Wollam A."/>
            <person name="Shah N."/>
            <person name="Pepin K."/>
            <person name="Bhonagiri V."/>
            <person name="Nash W."/>
            <person name="Johnson M."/>
            <person name="Thiruvilangam P."/>
            <person name="Wilson R."/>
        </authorList>
    </citation>
    <scope>NUCLEOTIDE SEQUENCE [LARGE SCALE GENOMIC DNA]</scope>
    <source>
        <strain>ATCC BAA-1250 / SPB7</strain>
    </source>
</reference>
<proteinExistence type="inferred from homology"/>
<sequence>MIERGKFRSLTLINWNGFFARTFDLDELVTTLSGGNGAGKSTTMAAFVTALIPDLTLLHFRNTTEAGATSGSRDKGLHGKLKAGVCYSMLDTINSRHQRVVVGVRLQQVAGRDRKVDIKPFAIQGLPMSVQPTQLVTETLNERQARVLSLAELKDKLDEMEGVQFKQFNSITDYHSLMFDLGIIARRLRSASDRSKFYRLIEASLYGGISSAITRSLRDYLLPENSGVRKAFQDMEAALRENRLTLEAIRVTQSDRDLFKHLISEATDYVAADYMRHANERRVHLDQALAFRRELYTSRKQLAAEQYKHVDMARELGEHNGAEGSLEADYQAASDHLNLVQTALRQQEKIERYEADLEELQIRLEEQNEVVAEAAEMQDENEARAEAAELEVDELKSQLADYQQALDVQQTRAIQYNQAISALARAKELCHLPDLTPESAAEWLDTFQAKEQEATEKLLSLEQKMSVAQTAHSQFEQAYQLVAAINGPLARSEAWDVARELLRDGVNQRHLAEQVQPLRMRLSELEQRLREQQEAERLLAEFCKRQGKNFDIDELEALHQELEARIASLSDSVSSASEQRMALRQEQEQLQSRIQHLMQRAPVWLAAQNSLNQLSEQCGEEFTSSQEVTEYLQQLLEREREAIVERDEVGARKNAVDEEIERLSQPGGAEDQRLNALAERFGGVLLSEIYDDVSLEDAPYFSALYGPSRHAIVVPDLSQIAEQLEGLTDCPEDLYLIEGDPQSFDDSVFSVDELEKAVVVKIADRQWRYSRFPSLPIFGRAARENRIESLHAEREVLSERFATLSFDVQKTQRLHQAFSRFIGSHLSVAFEDDPEAEIRRLNGRRVELERALATHENDNQQQRLQFEQAKEGVSALNRLLPRLNLLADETLADRVDEIQERLDEAQEAARFVQQYGNQLAKLEPVVSVLQSDPEQFEQLKEDYAWSQQMQRDARQQAFALAEVVERRAHFSYSDSAEMLSGNSDLNEKLRQRLEQAEAERTRAREALRSHAAQLSQYSQVLASLKSSYDTKKELLNDLQRELQDIGVRADSGAEERARQRRDELHAQLSNNRSRRNQLEKALTFCEAEMENLTRKLRKLERDYHEMREQVVTAKAGWCAVMRMVKDNGVERRLHRRELAYLSADELRSMSDKALGALRLAVADNEHLRDVLRLSEDPKRPERKIQFFVAVYQHLRERIRQDIIRTDDPVEAIEQMEIELSRLTEELTSREQKLAISSRSVANIIRKTIQREQNRIRMLNQGLQSVSFGQVNSVRLNVNVRETHATLLDVLSEQQEQHQDLFNSNRLTFSEALAKLYQRLNPQIDMGQRTPQTIGEELLDYRNYLEMEVEVNRGSDGWLRAESGALSTGEAIGTGMSILVMVVQSWEDEARRLRGKDISPCRLLFLDEAARLDARSIATLFELCERLQMQLIIAAPENISPEKGTTYKLVRKVFQNTEHVHVVGLRGFAPQLPETLPGTQTEDTPSEAS</sequence>
<organism>
    <name type="scientific">Salmonella paratyphi B (strain ATCC BAA-1250 / SPB7)</name>
    <dbReference type="NCBI Taxonomy" id="1016998"/>
    <lineage>
        <taxon>Bacteria</taxon>
        <taxon>Pseudomonadati</taxon>
        <taxon>Pseudomonadota</taxon>
        <taxon>Gammaproteobacteria</taxon>
        <taxon>Enterobacterales</taxon>
        <taxon>Enterobacteriaceae</taxon>
        <taxon>Salmonella</taxon>
    </lineage>
</organism>
<name>MUKB_SALPB</name>
<comment type="function">
    <text evidence="1">Plays a central role in chromosome condensation, segregation and cell cycle progression. Functions as a homodimer, which is essential for chromosome partition. Involved in negative DNA supercoiling in vivo, and by this means organize and compact chromosomes. May achieve or facilitate chromosome segregation by condensation DNA from both sides of a centrally located replisome during cell division.</text>
</comment>
<comment type="subunit">
    <text evidence="1">Homodimerization via its hinge domain. Binds to DNA via its C-terminal region. Interacts, and probably forms a ternary complex, with MukE and MukF via its C-terminal region. The complex formation is stimulated by calcium or magnesium. Interacts with tubulin-related protein FtsZ.</text>
</comment>
<comment type="subcellular location">
    <subcellularLocation>
        <location evidence="1">Cytoplasm</location>
        <location evidence="1">Nucleoid</location>
    </subcellularLocation>
    <text evidence="1">Restricted to the nucleoid region.</text>
</comment>
<comment type="domain">
    <text evidence="1">The hinge domain, which separates the large intramolecular coiled coil regions, allows the homodimerization, forming a V-shaped homodimer.</text>
</comment>
<comment type="similarity">
    <text evidence="1">Belongs to the SMC family. MukB subfamily.</text>
</comment>
<evidence type="ECO:0000255" key="1">
    <source>
        <dbReference type="HAMAP-Rule" id="MF_01800"/>
    </source>
</evidence>
<feature type="chain" id="PRO_1000088221" description="Chromosome partition protein MukB">
    <location>
        <begin position="1"/>
        <end position="1488"/>
    </location>
</feature>
<feature type="region of interest" description="Flexible hinge" evidence="1">
    <location>
        <begin position="666"/>
        <end position="783"/>
    </location>
</feature>
<feature type="coiled-coil region" evidence="1">
    <location>
        <begin position="326"/>
        <end position="418"/>
    </location>
</feature>
<feature type="coiled-coil region" evidence="1">
    <location>
        <begin position="444"/>
        <end position="472"/>
    </location>
</feature>
<feature type="coiled-coil region" evidence="1">
    <location>
        <begin position="509"/>
        <end position="602"/>
    </location>
</feature>
<feature type="coiled-coil region" evidence="1">
    <location>
        <begin position="835"/>
        <end position="923"/>
    </location>
</feature>
<feature type="coiled-coil region" evidence="1">
    <location>
        <begin position="977"/>
        <end position="1116"/>
    </location>
</feature>
<feature type="coiled-coil region" evidence="1">
    <location>
        <begin position="1209"/>
        <end position="1265"/>
    </location>
</feature>
<feature type="binding site" evidence="1">
    <location>
        <begin position="34"/>
        <end position="41"/>
    </location>
    <ligand>
        <name>ATP</name>
        <dbReference type="ChEBI" id="CHEBI:30616"/>
    </ligand>
</feature>
<keyword id="KW-0067">ATP-binding</keyword>
<keyword id="KW-0131">Cell cycle</keyword>
<keyword id="KW-0132">Cell division</keyword>
<keyword id="KW-0159">Chromosome partition</keyword>
<keyword id="KW-0175">Coiled coil</keyword>
<keyword id="KW-0963">Cytoplasm</keyword>
<keyword id="KW-0226">DNA condensation</keyword>
<keyword id="KW-0238">DNA-binding</keyword>
<keyword id="KW-0547">Nucleotide-binding</keyword>
<dbReference type="EMBL" id="CP000886">
    <property type="protein sequence ID" value="ABX67899.1"/>
    <property type="molecule type" value="Genomic_DNA"/>
</dbReference>
<dbReference type="RefSeq" id="WP_000572733.1">
    <property type="nucleotide sequence ID" value="NC_010102.1"/>
</dbReference>
<dbReference type="SMR" id="A9N7T7"/>
<dbReference type="KEGG" id="spq:SPAB_02519"/>
<dbReference type="PATRIC" id="fig|1016998.12.peg.2386"/>
<dbReference type="HOGENOM" id="CLU_004430_0_0_6"/>
<dbReference type="BioCyc" id="SENT1016998:SPAB_RS10235-MONOMER"/>
<dbReference type="Proteomes" id="UP000008556">
    <property type="component" value="Chromosome"/>
</dbReference>
<dbReference type="GO" id="GO:0005737">
    <property type="term" value="C:cytoplasm"/>
    <property type="evidence" value="ECO:0007669"/>
    <property type="project" value="UniProtKB-UniRule"/>
</dbReference>
<dbReference type="GO" id="GO:0009295">
    <property type="term" value="C:nucleoid"/>
    <property type="evidence" value="ECO:0007669"/>
    <property type="project" value="UniProtKB-SubCell"/>
</dbReference>
<dbReference type="GO" id="GO:0005524">
    <property type="term" value="F:ATP binding"/>
    <property type="evidence" value="ECO:0007669"/>
    <property type="project" value="UniProtKB-UniRule"/>
</dbReference>
<dbReference type="GO" id="GO:0003677">
    <property type="term" value="F:DNA binding"/>
    <property type="evidence" value="ECO:0007669"/>
    <property type="project" value="UniProtKB-UniRule"/>
</dbReference>
<dbReference type="GO" id="GO:0051301">
    <property type="term" value="P:cell division"/>
    <property type="evidence" value="ECO:0007669"/>
    <property type="project" value="UniProtKB-KW"/>
</dbReference>
<dbReference type="GO" id="GO:0030261">
    <property type="term" value="P:chromosome condensation"/>
    <property type="evidence" value="ECO:0007669"/>
    <property type="project" value="UniProtKB-KW"/>
</dbReference>
<dbReference type="GO" id="GO:0007059">
    <property type="term" value="P:chromosome segregation"/>
    <property type="evidence" value="ECO:0007669"/>
    <property type="project" value="UniProtKB-UniRule"/>
</dbReference>
<dbReference type="GO" id="GO:0006260">
    <property type="term" value="P:DNA replication"/>
    <property type="evidence" value="ECO:0007669"/>
    <property type="project" value="UniProtKB-UniRule"/>
</dbReference>
<dbReference type="FunFam" id="1.20.58.850:FF:000001">
    <property type="entry name" value="Chromosome partition protein MukB"/>
    <property type="match status" value="1"/>
</dbReference>
<dbReference type="FunFam" id="3.30.70.3500:FF:000001">
    <property type="entry name" value="Chromosome partition protein MukB"/>
    <property type="match status" value="1"/>
</dbReference>
<dbReference type="FunFam" id="3.40.1140.10:FF:000001">
    <property type="entry name" value="Chromosome partition protein MukB"/>
    <property type="match status" value="1"/>
</dbReference>
<dbReference type="FunFam" id="3.40.1140.10:FF:000002">
    <property type="entry name" value="Chromosome partition protein MukB"/>
    <property type="match status" value="1"/>
</dbReference>
<dbReference type="Gene3D" id="1.10.287.1490">
    <property type="match status" value="1"/>
</dbReference>
<dbReference type="Gene3D" id="1.20.58.850">
    <property type="match status" value="1"/>
</dbReference>
<dbReference type="Gene3D" id="3.40.1140.10">
    <property type="match status" value="2"/>
</dbReference>
<dbReference type="Gene3D" id="1.20.5.420">
    <property type="entry name" value="Immunoglobulin FC, subunit C"/>
    <property type="match status" value="1"/>
</dbReference>
<dbReference type="Gene3D" id="3.30.70.3500">
    <property type="entry name" value="MukB, hinge domain"/>
    <property type="match status" value="1"/>
</dbReference>
<dbReference type="HAMAP" id="MF_01800">
    <property type="entry name" value="MukB"/>
    <property type="match status" value="1"/>
</dbReference>
<dbReference type="InterPro" id="IPR012090">
    <property type="entry name" value="MukB"/>
</dbReference>
<dbReference type="InterPro" id="IPR050308">
    <property type="entry name" value="MukB/SMC"/>
</dbReference>
<dbReference type="InterPro" id="IPR032520">
    <property type="entry name" value="MukB_hinge"/>
</dbReference>
<dbReference type="InterPro" id="IPR042501">
    <property type="entry name" value="MukB_hinge_sf"/>
</dbReference>
<dbReference type="InterPro" id="IPR007406">
    <property type="entry name" value="MukB_N_dom"/>
</dbReference>
<dbReference type="InterPro" id="IPR027417">
    <property type="entry name" value="P-loop_NTPase"/>
</dbReference>
<dbReference type="NCBIfam" id="NF003422">
    <property type="entry name" value="PRK04863.1"/>
    <property type="match status" value="1"/>
</dbReference>
<dbReference type="PANTHER" id="PTHR42963">
    <property type="entry name" value="CHROMOSOME PARTITION PROTEIN MUKB"/>
    <property type="match status" value="1"/>
</dbReference>
<dbReference type="PANTHER" id="PTHR42963:SF1">
    <property type="entry name" value="DUF4476 DOMAIN-CONTAINING PROTEIN"/>
    <property type="match status" value="1"/>
</dbReference>
<dbReference type="Pfam" id="PF04310">
    <property type="entry name" value="MukB"/>
    <property type="match status" value="1"/>
</dbReference>
<dbReference type="Pfam" id="PF16330">
    <property type="entry name" value="MukB_hinge"/>
    <property type="match status" value="1"/>
</dbReference>
<dbReference type="Pfam" id="PF13558">
    <property type="entry name" value="SbcC_Walker_B"/>
    <property type="match status" value="1"/>
</dbReference>
<dbReference type="PIRSF" id="PIRSF005246">
    <property type="entry name" value="MukB"/>
    <property type="match status" value="1"/>
</dbReference>
<dbReference type="SUPFAM" id="SSF52540">
    <property type="entry name" value="P-loop containing nucleoside triphosphate hydrolases"/>
    <property type="match status" value="2"/>
</dbReference>
<protein>
    <recommendedName>
        <fullName evidence="1">Chromosome partition protein MukB</fullName>
    </recommendedName>
    <alternativeName>
        <fullName evidence="1">Structural maintenance of chromosome-related protein</fullName>
    </alternativeName>
</protein>
<gene>
    <name evidence="1" type="primary">mukB</name>
    <name type="ordered locus">SPAB_02519</name>
</gene>